<sequence length="310" mass="34702">MKASTSRAKLHPRNQHLNGYDLDLLTEQHPALSAFIITTPAGTKSIDFSDNKAVKTLNQALLKAHYNVDFWDIPQHNLCPPIPGRVDYIHYLADLLADDNQTQIPTGRQVKVLDIGTGANLVYPLTGGHEYNWHFTGTDIDPAAIKVAKQIAQFNNLKITLKQQKNAANIFKGVINSKDLYHLTLCNPPFHASSEDAVKGSERKWKNLGKAPSSTLNFGGQNNELWCEGGEVQFISNMIKESAAVAEQVMWFTSLVSKKDNIAALEQELKQHPIAQYKIVDMAQGQKVSRFIAWSYFDKATREQICEELE</sequence>
<accession>Q3IBW7</accession>
<organism>
    <name type="scientific">Pseudoalteromonas translucida (strain TAC 125)</name>
    <dbReference type="NCBI Taxonomy" id="326442"/>
    <lineage>
        <taxon>Bacteria</taxon>
        <taxon>Pseudomonadati</taxon>
        <taxon>Pseudomonadota</taxon>
        <taxon>Gammaproteobacteria</taxon>
        <taxon>Alteromonadales</taxon>
        <taxon>Pseudoalteromonadaceae</taxon>
        <taxon>Pseudoalteromonas</taxon>
    </lineage>
</organism>
<proteinExistence type="inferred from homology"/>
<name>RLMF_PSET1</name>
<comment type="function">
    <text evidence="1">Specifically methylates the adenine in position 1618 of 23S rRNA.</text>
</comment>
<comment type="catalytic activity">
    <reaction evidence="1">
        <text>adenosine(1618) in 23S rRNA + S-adenosyl-L-methionine = N(6)-methyladenosine(1618) in 23S rRNA + S-adenosyl-L-homocysteine + H(+)</text>
        <dbReference type="Rhea" id="RHEA:16497"/>
        <dbReference type="Rhea" id="RHEA-COMP:10229"/>
        <dbReference type="Rhea" id="RHEA-COMP:10231"/>
        <dbReference type="ChEBI" id="CHEBI:15378"/>
        <dbReference type="ChEBI" id="CHEBI:57856"/>
        <dbReference type="ChEBI" id="CHEBI:59789"/>
        <dbReference type="ChEBI" id="CHEBI:74411"/>
        <dbReference type="ChEBI" id="CHEBI:74449"/>
        <dbReference type="EC" id="2.1.1.181"/>
    </reaction>
</comment>
<comment type="subcellular location">
    <subcellularLocation>
        <location evidence="1">Cytoplasm</location>
    </subcellularLocation>
</comment>
<comment type="similarity">
    <text evidence="1">Belongs to the methyltransferase superfamily. METTL16/RlmF family.</text>
</comment>
<comment type="sequence caution" evidence="2">
    <conflict type="erroneous initiation">
        <sequence resource="EMBL-CDS" id="CAI89337"/>
    </conflict>
</comment>
<dbReference type="EC" id="2.1.1.181" evidence="1"/>
<dbReference type="EMBL" id="CR954247">
    <property type="protein sequence ID" value="CAI89337.1"/>
    <property type="status" value="ALT_INIT"/>
    <property type="molecule type" value="Genomic_DNA"/>
</dbReference>
<dbReference type="SMR" id="Q3IBW7"/>
<dbReference type="STRING" id="326442.PSHAb0296"/>
<dbReference type="KEGG" id="pha:PSHAb0296"/>
<dbReference type="PATRIC" id="fig|326442.8.peg.3205"/>
<dbReference type="eggNOG" id="COG3129">
    <property type="taxonomic scope" value="Bacteria"/>
</dbReference>
<dbReference type="HOGENOM" id="CLU_027534_3_0_6"/>
<dbReference type="BioCyc" id="PHAL326442:PSHA_RS16275-MONOMER"/>
<dbReference type="Proteomes" id="UP000006843">
    <property type="component" value="Chromosome II"/>
</dbReference>
<dbReference type="GO" id="GO:0005737">
    <property type="term" value="C:cytoplasm"/>
    <property type="evidence" value="ECO:0007669"/>
    <property type="project" value="UniProtKB-SubCell"/>
</dbReference>
<dbReference type="GO" id="GO:0052907">
    <property type="term" value="F:23S rRNA (adenine(1618)-N(6))-methyltransferase activity"/>
    <property type="evidence" value="ECO:0007669"/>
    <property type="project" value="UniProtKB-EC"/>
</dbReference>
<dbReference type="GO" id="GO:0070475">
    <property type="term" value="P:rRNA base methylation"/>
    <property type="evidence" value="ECO:0007669"/>
    <property type="project" value="TreeGrafter"/>
</dbReference>
<dbReference type="CDD" id="cd02440">
    <property type="entry name" value="AdoMet_MTases"/>
    <property type="match status" value="1"/>
</dbReference>
<dbReference type="Gene3D" id="3.40.50.150">
    <property type="entry name" value="Vaccinia Virus protein VP39"/>
    <property type="match status" value="1"/>
</dbReference>
<dbReference type="HAMAP" id="MF_01848">
    <property type="entry name" value="23SrRNA_methyltr_F"/>
    <property type="match status" value="1"/>
</dbReference>
<dbReference type="InterPro" id="IPR010286">
    <property type="entry name" value="METTL16/RlmF"/>
</dbReference>
<dbReference type="InterPro" id="IPR016909">
    <property type="entry name" value="rRNA_lsu_MeTfrase_F"/>
</dbReference>
<dbReference type="InterPro" id="IPR029063">
    <property type="entry name" value="SAM-dependent_MTases_sf"/>
</dbReference>
<dbReference type="NCBIfam" id="NF008725">
    <property type="entry name" value="PRK11727.1"/>
    <property type="match status" value="1"/>
</dbReference>
<dbReference type="PANTHER" id="PTHR13393:SF0">
    <property type="entry name" value="RNA N6-ADENOSINE-METHYLTRANSFERASE METTL16"/>
    <property type="match status" value="1"/>
</dbReference>
<dbReference type="PANTHER" id="PTHR13393">
    <property type="entry name" value="SAM-DEPENDENT METHYLTRANSFERASE"/>
    <property type="match status" value="1"/>
</dbReference>
<dbReference type="Pfam" id="PF05971">
    <property type="entry name" value="Methyltransf_10"/>
    <property type="match status" value="1"/>
</dbReference>
<dbReference type="PIRSF" id="PIRSF029038">
    <property type="entry name" value="Mtase_YbiN_prd"/>
    <property type="match status" value="1"/>
</dbReference>
<dbReference type="SUPFAM" id="SSF53335">
    <property type="entry name" value="S-adenosyl-L-methionine-dependent methyltransferases"/>
    <property type="match status" value="1"/>
</dbReference>
<keyword id="KW-0963">Cytoplasm</keyword>
<keyword id="KW-0489">Methyltransferase</keyword>
<keyword id="KW-1185">Reference proteome</keyword>
<keyword id="KW-0698">rRNA processing</keyword>
<keyword id="KW-0949">S-adenosyl-L-methionine</keyword>
<keyword id="KW-0808">Transferase</keyword>
<reference key="1">
    <citation type="journal article" date="2005" name="Genome Res.">
        <title>Coping with cold: the genome of the versatile marine Antarctica bacterium Pseudoalteromonas haloplanktis TAC125.</title>
        <authorList>
            <person name="Medigue C."/>
            <person name="Krin E."/>
            <person name="Pascal G."/>
            <person name="Barbe V."/>
            <person name="Bernsel A."/>
            <person name="Bertin P.N."/>
            <person name="Cheung F."/>
            <person name="Cruveiller S."/>
            <person name="D'Amico S."/>
            <person name="Duilio A."/>
            <person name="Fang G."/>
            <person name="Feller G."/>
            <person name="Ho C."/>
            <person name="Mangenot S."/>
            <person name="Marino G."/>
            <person name="Nilsson J."/>
            <person name="Parrilli E."/>
            <person name="Rocha E.P.C."/>
            <person name="Rouy Z."/>
            <person name="Sekowska A."/>
            <person name="Tutino M.L."/>
            <person name="Vallenet D."/>
            <person name="von Heijne G."/>
            <person name="Danchin A."/>
        </authorList>
    </citation>
    <scope>NUCLEOTIDE SEQUENCE [LARGE SCALE GENOMIC DNA]</scope>
    <source>
        <strain>TAC 125</strain>
    </source>
</reference>
<evidence type="ECO:0000255" key="1">
    <source>
        <dbReference type="HAMAP-Rule" id="MF_01848"/>
    </source>
</evidence>
<evidence type="ECO:0000305" key="2"/>
<gene>
    <name evidence="1" type="primary">rlmF</name>
    <name type="ordered locus">PSHAb0296</name>
</gene>
<feature type="chain" id="PRO_0000349924" description="Ribosomal RNA large subunit methyltransferase F">
    <location>
        <begin position="1"/>
        <end position="310"/>
    </location>
</feature>
<protein>
    <recommendedName>
        <fullName evidence="1">Ribosomal RNA large subunit methyltransferase F</fullName>
        <ecNumber evidence="1">2.1.1.181</ecNumber>
    </recommendedName>
    <alternativeName>
        <fullName evidence="1">23S rRNA mA1618 methyltransferase</fullName>
    </alternativeName>
    <alternativeName>
        <fullName evidence="1">rRNA adenine N-6-methyltransferase</fullName>
    </alternativeName>
</protein>